<keyword id="KW-0067">ATP-binding</keyword>
<keyword id="KW-0143">Chaperone</keyword>
<keyword id="KW-0479">Metal-binding</keyword>
<keyword id="KW-0547">Nucleotide-binding</keyword>
<keyword id="KW-0862">Zinc</keyword>
<dbReference type="EMBL" id="CU928160">
    <property type="protein sequence ID" value="CAQ97314.1"/>
    <property type="molecule type" value="Genomic_DNA"/>
</dbReference>
<dbReference type="RefSeq" id="WP_000130305.1">
    <property type="nucleotide sequence ID" value="NC_011741.1"/>
</dbReference>
<dbReference type="SMR" id="B7M3T1"/>
<dbReference type="GeneID" id="93777016"/>
<dbReference type="KEGG" id="ecr:ECIAI1_0442"/>
<dbReference type="HOGENOM" id="CLU_014218_8_2_6"/>
<dbReference type="GO" id="GO:0009376">
    <property type="term" value="C:HslUV protease complex"/>
    <property type="evidence" value="ECO:0007669"/>
    <property type="project" value="TreeGrafter"/>
</dbReference>
<dbReference type="GO" id="GO:0005524">
    <property type="term" value="F:ATP binding"/>
    <property type="evidence" value="ECO:0007669"/>
    <property type="project" value="UniProtKB-UniRule"/>
</dbReference>
<dbReference type="GO" id="GO:0016887">
    <property type="term" value="F:ATP hydrolysis activity"/>
    <property type="evidence" value="ECO:0007669"/>
    <property type="project" value="InterPro"/>
</dbReference>
<dbReference type="GO" id="GO:0140662">
    <property type="term" value="F:ATP-dependent protein folding chaperone"/>
    <property type="evidence" value="ECO:0007669"/>
    <property type="project" value="InterPro"/>
</dbReference>
<dbReference type="GO" id="GO:0046983">
    <property type="term" value="F:protein dimerization activity"/>
    <property type="evidence" value="ECO:0007669"/>
    <property type="project" value="InterPro"/>
</dbReference>
<dbReference type="GO" id="GO:0051082">
    <property type="term" value="F:unfolded protein binding"/>
    <property type="evidence" value="ECO:0007669"/>
    <property type="project" value="UniProtKB-UniRule"/>
</dbReference>
<dbReference type="GO" id="GO:0008270">
    <property type="term" value="F:zinc ion binding"/>
    <property type="evidence" value="ECO:0007669"/>
    <property type="project" value="InterPro"/>
</dbReference>
<dbReference type="GO" id="GO:0051301">
    <property type="term" value="P:cell division"/>
    <property type="evidence" value="ECO:0007669"/>
    <property type="project" value="TreeGrafter"/>
</dbReference>
<dbReference type="GO" id="GO:0051603">
    <property type="term" value="P:proteolysis involved in protein catabolic process"/>
    <property type="evidence" value="ECO:0007669"/>
    <property type="project" value="TreeGrafter"/>
</dbReference>
<dbReference type="CDD" id="cd19497">
    <property type="entry name" value="RecA-like_ClpX"/>
    <property type="match status" value="1"/>
</dbReference>
<dbReference type="FunFam" id="1.10.8.60:FF:000002">
    <property type="entry name" value="ATP-dependent Clp protease ATP-binding subunit ClpX"/>
    <property type="match status" value="1"/>
</dbReference>
<dbReference type="FunFam" id="3.40.50.300:FF:000005">
    <property type="entry name" value="ATP-dependent Clp protease ATP-binding subunit ClpX"/>
    <property type="match status" value="1"/>
</dbReference>
<dbReference type="Gene3D" id="1.10.8.60">
    <property type="match status" value="1"/>
</dbReference>
<dbReference type="Gene3D" id="6.20.220.10">
    <property type="entry name" value="ClpX chaperone, C4-type zinc finger domain"/>
    <property type="match status" value="1"/>
</dbReference>
<dbReference type="Gene3D" id="3.40.50.300">
    <property type="entry name" value="P-loop containing nucleotide triphosphate hydrolases"/>
    <property type="match status" value="1"/>
</dbReference>
<dbReference type="HAMAP" id="MF_00175">
    <property type="entry name" value="ClpX"/>
    <property type="match status" value="1"/>
</dbReference>
<dbReference type="InterPro" id="IPR003593">
    <property type="entry name" value="AAA+_ATPase"/>
</dbReference>
<dbReference type="InterPro" id="IPR050052">
    <property type="entry name" value="ATP-dep_Clp_protease_ClpX"/>
</dbReference>
<dbReference type="InterPro" id="IPR003959">
    <property type="entry name" value="ATPase_AAA_core"/>
</dbReference>
<dbReference type="InterPro" id="IPR019489">
    <property type="entry name" value="Clp_ATPase_C"/>
</dbReference>
<dbReference type="InterPro" id="IPR004487">
    <property type="entry name" value="Clp_protease_ATP-bd_su_ClpX"/>
</dbReference>
<dbReference type="InterPro" id="IPR046425">
    <property type="entry name" value="ClpX_bact"/>
</dbReference>
<dbReference type="InterPro" id="IPR027417">
    <property type="entry name" value="P-loop_NTPase"/>
</dbReference>
<dbReference type="InterPro" id="IPR010603">
    <property type="entry name" value="Znf_CppX_C4"/>
</dbReference>
<dbReference type="InterPro" id="IPR038366">
    <property type="entry name" value="Znf_CppX_C4_sf"/>
</dbReference>
<dbReference type="NCBIfam" id="TIGR00382">
    <property type="entry name" value="clpX"/>
    <property type="match status" value="1"/>
</dbReference>
<dbReference type="NCBIfam" id="NF003745">
    <property type="entry name" value="PRK05342.1"/>
    <property type="match status" value="1"/>
</dbReference>
<dbReference type="PANTHER" id="PTHR48102:SF7">
    <property type="entry name" value="ATP-DEPENDENT CLP PROTEASE ATP-BINDING SUBUNIT CLPX-LIKE, MITOCHONDRIAL"/>
    <property type="match status" value="1"/>
</dbReference>
<dbReference type="PANTHER" id="PTHR48102">
    <property type="entry name" value="ATP-DEPENDENT CLP PROTEASE ATP-BINDING SUBUNIT CLPX-LIKE, MITOCHONDRIAL-RELATED"/>
    <property type="match status" value="1"/>
</dbReference>
<dbReference type="Pfam" id="PF07724">
    <property type="entry name" value="AAA_2"/>
    <property type="match status" value="1"/>
</dbReference>
<dbReference type="Pfam" id="PF10431">
    <property type="entry name" value="ClpB_D2-small"/>
    <property type="match status" value="1"/>
</dbReference>
<dbReference type="Pfam" id="PF06689">
    <property type="entry name" value="zf-C4_ClpX"/>
    <property type="match status" value="1"/>
</dbReference>
<dbReference type="SMART" id="SM00382">
    <property type="entry name" value="AAA"/>
    <property type="match status" value="1"/>
</dbReference>
<dbReference type="SMART" id="SM01086">
    <property type="entry name" value="ClpB_D2-small"/>
    <property type="match status" value="1"/>
</dbReference>
<dbReference type="SMART" id="SM00994">
    <property type="entry name" value="zf-C4_ClpX"/>
    <property type="match status" value="1"/>
</dbReference>
<dbReference type="SUPFAM" id="SSF57716">
    <property type="entry name" value="Glucocorticoid receptor-like (DNA-binding domain)"/>
    <property type="match status" value="1"/>
</dbReference>
<dbReference type="SUPFAM" id="SSF52540">
    <property type="entry name" value="P-loop containing nucleoside triphosphate hydrolases"/>
    <property type="match status" value="1"/>
</dbReference>
<dbReference type="PROSITE" id="PS51902">
    <property type="entry name" value="CLPX_ZB"/>
    <property type="match status" value="1"/>
</dbReference>
<proteinExistence type="inferred from homology"/>
<comment type="function">
    <text evidence="1">ATP-dependent specificity component of the Clp protease. It directs the protease to specific substrates. Can perform chaperone functions in the absence of ClpP.</text>
</comment>
<comment type="subunit">
    <text evidence="1">Component of the ClpX-ClpP complex. Forms a hexameric ring that, in the presence of ATP, binds to fourteen ClpP subunits assembled into a disk-like structure with a central cavity, resembling the structure of eukaryotic proteasomes.</text>
</comment>
<comment type="similarity">
    <text evidence="1">Belongs to the ClpX chaperone family.</text>
</comment>
<feature type="chain" id="PRO_1000118368" description="ATP-dependent Clp protease ATP-binding subunit ClpX">
    <location>
        <begin position="1"/>
        <end position="424"/>
    </location>
</feature>
<feature type="domain" description="ClpX-type ZB" evidence="2">
    <location>
        <begin position="2"/>
        <end position="56"/>
    </location>
</feature>
<feature type="binding site" evidence="2">
    <location>
        <position position="15"/>
    </location>
    <ligand>
        <name>Zn(2+)</name>
        <dbReference type="ChEBI" id="CHEBI:29105"/>
    </ligand>
</feature>
<feature type="binding site" evidence="2">
    <location>
        <position position="18"/>
    </location>
    <ligand>
        <name>Zn(2+)</name>
        <dbReference type="ChEBI" id="CHEBI:29105"/>
    </ligand>
</feature>
<feature type="binding site" evidence="2">
    <location>
        <position position="37"/>
    </location>
    <ligand>
        <name>Zn(2+)</name>
        <dbReference type="ChEBI" id="CHEBI:29105"/>
    </ligand>
</feature>
<feature type="binding site" evidence="2">
    <location>
        <position position="40"/>
    </location>
    <ligand>
        <name>Zn(2+)</name>
        <dbReference type="ChEBI" id="CHEBI:29105"/>
    </ligand>
</feature>
<feature type="binding site" evidence="1">
    <location>
        <begin position="120"/>
        <end position="127"/>
    </location>
    <ligand>
        <name>ATP</name>
        <dbReference type="ChEBI" id="CHEBI:30616"/>
    </ligand>
</feature>
<accession>B7M3T1</accession>
<reference key="1">
    <citation type="journal article" date="2009" name="PLoS Genet.">
        <title>Organised genome dynamics in the Escherichia coli species results in highly diverse adaptive paths.</title>
        <authorList>
            <person name="Touchon M."/>
            <person name="Hoede C."/>
            <person name="Tenaillon O."/>
            <person name="Barbe V."/>
            <person name="Baeriswyl S."/>
            <person name="Bidet P."/>
            <person name="Bingen E."/>
            <person name="Bonacorsi S."/>
            <person name="Bouchier C."/>
            <person name="Bouvet O."/>
            <person name="Calteau A."/>
            <person name="Chiapello H."/>
            <person name="Clermont O."/>
            <person name="Cruveiller S."/>
            <person name="Danchin A."/>
            <person name="Diard M."/>
            <person name="Dossat C."/>
            <person name="Karoui M.E."/>
            <person name="Frapy E."/>
            <person name="Garry L."/>
            <person name="Ghigo J.M."/>
            <person name="Gilles A.M."/>
            <person name="Johnson J."/>
            <person name="Le Bouguenec C."/>
            <person name="Lescat M."/>
            <person name="Mangenot S."/>
            <person name="Martinez-Jehanne V."/>
            <person name="Matic I."/>
            <person name="Nassif X."/>
            <person name="Oztas S."/>
            <person name="Petit M.A."/>
            <person name="Pichon C."/>
            <person name="Rouy Z."/>
            <person name="Ruf C.S."/>
            <person name="Schneider D."/>
            <person name="Tourret J."/>
            <person name="Vacherie B."/>
            <person name="Vallenet D."/>
            <person name="Medigue C."/>
            <person name="Rocha E.P.C."/>
            <person name="Denamur E."/>
        </authorList>
    </citation>
    <scope>NUCLEOTIDE SEQUENCE [LARGE SCALE GENOMIC DNA]</scope>
    <source>
        <strain>IAI1</strain>
    </source>
</reference>
<protein>
    <recommendedName>
        <fullName evidence="1">ATP-dependent Clp protease ATP-binding subunit ClpX</fullName>
    </recommendedName>
</protein>
<sequence>MTDKRKDGSGKLLYCSFCGKSQHEVRKLIAGPSVYICDECVDLCNDIIREEIKEVAPHRERSALPTPHEIRNHLDDYVIGQEQAKKVLAVAVYNHYKRLRNGDTSNGVELGKSNILLIGPTGSGKTLLAETLARLLDVPFTMADATTLTEAGYVGEDVENIIQKLLQKCDYDVQKAQRGIVYIDEIDKISRKSDNPSITRDVSGEGVQQALLKLIEGTVAAVPPQGGRKHPQQEFLQVDTSKILFICGGAFAGLDKVISHRVETGSGIGFGATVKAKSDKASEGELLAQVEPEDLIKFGLIPEFIGRLPVVATLNELSEEALIQILKEPKNALTKQYQALFNLEGVDLEFRDEALDAIAKKAMARKTGARGLRSIVEAALLDTMYDLPSMEDVEKVVIDESVIDGQSKPLLIYGKPEAQQASGE</sequence>
<gene>
    <name evidence="1" type="primary">clpX</name>
    <name type="ordered locus">ECIAI1_0442</name>
</gene>
<organism>
    <name type="scientific">Escherichia coli O8 (strain IAI1)</name>
    <dbReference type="NCBI Taxonomy" id="585034"/>
    <lineage>
        <taxon>Bacteria</taxon>
        <taxon>Pseudomonadati</taxon>
        <taxon>Pseudomonadota</taxon>
        <taxon>Gammaproteobacteria</taxon>
        <taxon>Enterobacterales</taxon>
        <taxon>Enterobacteriaceae</taxon>
        <taxon>Escherichia</taxon>
    </lineage>
</organism>
<name>CLPX_ECO8A</name>
<evidence type="ECO:0000255" key="1">
    <source>
        <dbReference type="HAMAP-Rule" id="MF_00175"/>
    </source>
</evidence>
<evidence type="ECO:0000255" key="2">
    <source>
        <dbReference type="PROSITE-ProRule" id="PRU01250"/>
    </source>
</evidence>